<evidence type="ECO:0000255" key="1">
    <source>
        <dbReference type="PROSITE-ProRule" id="PRU00267"/>
    </source>
</evidence>
<evidence type="ECO:0000256" key="2">
    <source>
        <dbReference type="SAM" id="MobiDB-lite"/>
    </source>
</evidence>
<evidence type="ECO:0000305" key="3"/>
<feature type="chain" id="PRO_0000048803" description="Putative transcription factor SOX-14">
    <location>
        <begin position="1"/>
        <end position="669"/>
    </location>
</feature>
<feature type="DNA-binding region" description="HMG box" evidence="1">
    <location>
        <begin position="187"/>
        <end position="255"/>
    </location>
</feature>
<feature type="region of interest" description="Disordered" evidence="2">
    <location>
        <begin position="1"/>
        <end position="149"/>
    </location>
</feature>
<feature type="region of interest" description="Disordered" evidence="2">
    <location>
        <begin position="254"/>
        <end position="336"/>
    </location>
</feature>
<feature type="region of interest" description="Disordered" evidence="2">
    <location>
        <begin position="419"/>
        <end position="439"/>
    </location>
</feature>
<feature type="compositionally biased region" description="Polar residues" evidence="2">
    <location>
        <begin position="1"/>
        <end position="12"/>
    </location>
</feature>
<feature type="compositionally biased region" description="Low complexity" evidence="2">
    <location>
        <begin position="17"/>
        <end position="37"/>
    </location>
</feature>
<feature type="compositionally biased region" description="Pro residues" evidence="2">
    <location>
        <begin position="52"/>
        <end position="71"/>
    </location>
</feature>
<feature type="compositionally biased region" description="Polar residues" evidence="2">
    <location>
        <begin position="75"/>
        <end position="84"/>
    </location>
</feature>
<feature type="compositionally biased region" description="Low complexity" evidence="2">
    <location>
        <begin position="88"/>
        <end position="105"/>
    </location>
</feature>
<feature type="compositionally biased region" description="Basic and acidic residues" evidence="2">
    <location>
        <begin position="130"/>
        <end position="145"/>
    </location>
</feature>
<feature type="compositionally biased region" description="Low complexity" evidence="2">
    <location>
        <begin position="284"/>
        <end position="294"/>
    </location>
</feature>
<feature type="compositionally biased region" description="Polar residues" evidence="2">
    <location>
        <begin position="295"/>
        <end position="318"/>
    </location>
</feature>
<feature type="compositionally biased region" description="Basic and acidic residues" evidence="2">
    <location>
        <begin position="322"/>
        <end position="336"/>
    </location>
</feature>
<feature type="compositionally biased region" description="Polar residues" evidence="2">
    <location>
        <begin position="419"/>
        <end position="431"/>
    </location>
</feature>
<feature type="sequence conflict" description="In Ref. 3; CAB64387." evidence="3" ref="3">
    <original>APKTPKTPE</original>
    <variation>STEDPQDPG</variation>
    <location>
        <begin position="102"/>
        <end position="110"/>
    </location>
</feature>
<feature type="sequence conflict" description="In Ref. 3; CAB64387." evidence="3" ref="3">
    <location>
        <begin position="120"/>
        <end position="121"/>
    </location>
</feature>
<dbReference type="EMBL" id="AE013599">
    <property type="protein sequence ID" value="AAM68286.1"/>
    <property type="molecule type" value="Genomic_DNA"/>
</dbReference>
<dbReference type="EMBL" id="AJ252125">
    <property type="protein sequence ID" value="CAB64387.1"/>
    <property type="status" value="ALT_FRAME"/>
    <property type="molecule type" value="mRNA"/>
</dbReference>
<dbReference type="EMBL" id="X65667">
    <property type="protein sequence ID" value="CAA46618.1"/>
    <property type="molecule type" value="mRNA"/>
</dbReference>
<dbReference type="PIR" id="S22935">
    <property type="entry name" value="S22935"/>
</dbReference>
<dbReference type="RefSeq" id="NP_001286801.1">
    <property type="nucleotide sequence ID" value="NM_001299872.1"/>
</dbReference>
<dbReference type="RefSeq" id="NP_476894.1">
    <property type="nucleotide sequence ID" value="NM_057546.3"/>
</dbReference>
<dbReference type="RefSeq" id="NP_599117.1">
    <property type="nucleotide sequence ID" value="NM_134290.1"/>
</dbReference>
<dbReference type="SMR" id="P40656"/>
<dbReference type="BioGRID" id="63408">
    <property type="interactions" value="4"/>
</dbReference>
<dbReference type="FunCoup" id="P40656">
    <property type="interactions" value="120"/>
</dbReference>
<dbReference type="IntAct" id="P40656">
    <property type="interactions" value="2"/>
</dbReference>
<dbReference type="STRING" id="7227.FBpp0309947"/>
<dbReference type="PaxDb" id="7227-FBpp0072066"/>
<dbReference type="EnsemblMetazoa" id="FBtr0072157">
    <property type="protein sequence ID" value="FBpp0072066"/>
    <property type="gene ID" value="FBgn0005612"/>
</dbReference>
<dbReference type="EnsemblMetazoa" id="FBtr0072158">
    <property type="protein sequence ID" value="FBpp0072067"/>
    <property type="gene ID" value="FBgn0005612"/>
</dbReference>
<dbReference type="EnsemblMetazoa" id="FBtr0343282">
    <property type="protein sequence ID" value="FBpp0309947"/>
    <property type="gene ID" value="FBgn0005612"/>
</dbReference>
<dbReference type="GeneID" id="37822"/>
<dbReference type="KEGG" id="dme:Dmel_CG3090"/>
<dbReference type="AGR" id="FB:FBgn0005612"/>
<dbReference type="CTD" id="8403"/>
<dbReference type="FlyBase" id="FBgn0005612">
    <property type="gene designation" value="Sox14"/>
</dbReference>
<dbReference type="VEuPathDB" id="VectorBase:FBgn0005612"/>
<dbReference type="eggNOG" id="KOG0527">
    <property type="taxonomic scope" value="Eukaryota"/>
</dbReference>
<dbReference type="eggNOG" id="KOG1703">
    <property type="taxonomic scope" value="Eukaryota"/>
</dbReference>
<dbReference type="GeneTree" id="ENSGT00940000172703"/>
<dbReference type="HOGENOM" id="CLU_025599_0_0_1"/>
<dbReference type="InParanoid" id="P40656"/>
<dbReference type="OMA" id="QDYTGNV"/>
<dbReference type="OrthoDB" id="6247875at2759"/>
<dbReference type="PhylomeDB" id="P40656"/>
<dbReference type="Reactome" id="R-DME-3769402">
    <property type="pathway name" value="Deactivation of the beta-catenin transactivating complex"/>
</dbReference>
<dbReference type="BioGRID-ORCS" id="37822">
    <property type="hits" value="0 hits in 3 CRISPR screens"/>
</dbReference>
<dbReference type="ChiTaRS" id="Sox14">
    <property type="organism name" value="fly"/>
</dbReference>
<dbReference type="GenomeRNAi" id="37822"/>
<dbReference type="PRO" id="PR:P40656"/>
<dbReference type="Proteomes" id="UP000000803">
    <property type="component" value="Chromosome 2R"/>
</dbReference>
<dbReference type="Bgee" id="FBgn0005612">
    <property type="expression patterns" value="Expressed in dorsal appendage forming follicle cell in ovary and 187 other cell types or tissues"/>
</dbReference>
<dbReference type="ExpressionAtlas" id="P40656">
    <property type="expression patterns" value="baseline and differential"/>
</dbReference>
<dbReference type="GO" id="GO:0005634">
    <property type="term" value="C:nucleus"/>
    <property type="evidence" value="ECO:0000315"/>
    <property type="project" value="FlyBase"/>
</dbReference>
<dbReference type="GO" id="GO:0008301">
    <property type="term" value="F:DNA binding, bending"/>
    <property type="evidence" value="ECO:0000314"/>
    <property type="project" value="FlyBase"/>
</dbReference>
<dbReference type="GO" id="GO:0001228">
    <property type="term" value="F:DNA-binding transcription activator activity, RNA polymerase II-specific"/>
    <property type="evidence" value="ECO:0000318"/>
    <property type="project" value="GO_Central"/>
</dbReference>
<dbReference type="GO" id="GO:0000978">
    <property type="term" value="F:RNA polymerase II cis-regulatory region sequence-specific DNA binding"/>
    <property type="evidence" value="ECO:0000318"/>
    <property type="project" value="GO_Central"/>
</dbReference>
<dbReference type="GO" id="GO:0043565">
    <property type="term" value="F:sequence-specific DNA binding"/>
    <property type="evidence" value="ECO:0000314"/>
    <property type="project" value="FlyBase"/>
</dbReference>
<dbReference type="GO" id="GO:0007420">
    <property type="term" value="P:brain development"/>
    <property type="evidence" value="ECO:0000318"/>
    <property type="project" value="GO_Central"/>
</dbReference>
<dbReference type="GO" id="GO:0048813">
    <property type="term" value="P:dendrite morphogenesis"/>
    <property type="evidence" value="ECO:0000316"/>
    <property type="project" value="FlyBase"/>
</dbReference>
<dbReference type="GO" id="GO:0007552">
    <property type="term" value="P:metamorphosis"/>
    <property type="evidence" value="ECO:0000315"/>
    <property type="project" value="FlyBase"/>
</dbReference>
<dbReference type="GO" id="GO:0000122">
    <property type="term" value="P:negative regulation of transcription by RNA polymerase II"/>
    <property type="evidence" value="ECO:0000318"/>
    <property type="project" value="GO_Central"/>
</dbReference>
<dbReference type="GO" id="GO:0030182">
    <property type="term" value="P:neuron differentiation"/>
    <property type="evidence" value="ECO:0000318"/>
    <property type="project" value="GO_Central"/>
</dbReference>
<dbReference type="GO" id="GO:0016322">
    <property type="term" value="P:neuron remodeling"/>
    <property type="evidence" value="ECO:0000316"/>
    <property type="project" value="FlyBase"/>
</dbReference>
<dbReference type="GO" id="GO:1904801">
    <property type="term" value="P:positive regulation of neuron remodeling"/>
    <property type="evidence" value="ECO:0000315"/>
    <property type="project" value="FlyBase"/>
</dbReference>
<dbReference type="GO" id="GO:0045944">
    <property type="term" value="P:positive regulation of transcription by RNA polymerase II"/>
    <property type="evidence" value="ECO:0000318"/>
    <property type="project" value="GO_Central"/>
</dbReference>
<dbReference type="GO" id="GO:1904799">
    <property type="term" value="P:regulation of neuron remodeling"/>
    <property type="evidence" value="ECO:0000315"/>
    <property type="project" value="FlyBase"/>
</dbReference>
<dbReference type="GO" id="GO:0006357">
    <property type="term" value="P:regulation of transcription by RNA polymerase II"/>
    <property type="evidence" value="ECO:0000315"/>
    <property type="project" value="FlyBase"/>
</dbReference>
<dbReference type="CDD" id="cd22029">
    <property type="entry name" value="HMG-box_SoxC"/>
    <property type="match status" value="1"/>
</dbReference>
<dbReference type="FunFam" id="1.10.30.10:FF:000007">
    <property type="entry name" value="Transcription factor SOX"/>
    <property type="match status" value="1"/>
</dbReference>
<dbReference type="Gene3D" id="1.10.30.10">
    <property type="entry name" value="High mobility group box domain"/>
    <property type="match status" value="1"/>
</dbReference>
<dbReference type="InterPro" id="IPR009071">
    <property type="entry name" value="HMG_box_dom"/>
</dbReference>
<dbReference type="InterPro" id="IPR036910">
    <property type="entry name" value="HMG_box_dom_sf"/>
</dbReference>
<dbReference type="InterPro" id="IPR050140">
    <property type="entry name" value="SRY-related_HMG-box_TF-like"/>
</dbReference>
<dbReference type="PANTHER" id="PTHR10270">
    <property type="entry name" value="SOX TRANSCRIPTION FACTOR"/>
    <property type="match status" value="1"/>
</dbReference>
<dbReference type="PANTHER" id="PTHR10270:SF323">
    <property type="entry name" value="TRANSCRIPTION FACTOR SOX-14-RELATED"/>
    <property type="match status" value="1"/>
</dbReference>
<dbReference type="Pfam" id="PF00505">
    <property type="entry name" value="HMG_box"/>
    <property type="match status" value="1"/>
</dbReference>
<dbReference type="SMART" id="SM00398">
    <property type="entry name" value="HMG"/>
    <property type="match status" value="1"/>
</dbReference>
<dbReference type="SUPFAM" id="SSF47095">
    <property type="entry name" value="HMG-box"/>
    <property type="match status" value="1"/>
</dbReference>
<dbReference type="PROSITE" id="PS50118">
    <property type="entry name" value="HMG_BOX_2"/>
    <property type="match status" value="1"/>
</dbReference>
<comment type="subcellular location">
    <subcellularLocation>
        <location evidence="1">Nucleus</location>
    </subcellularLocation>
</comment>
<comment type="sequence caution" evidence="3">
    <conflict type="frameshift">
        <sequence resource="EMBL-CDS" id="CAB64387"/>
    </conflict>
</comment>
<proteinExistence type="evidence at transcript level"/>
<protein>
    <recommendedName>
        <fullName>Putative transcription factor SOX-14</fullName>
    </recommendedName>
</protein>
<accession>P40656</accession>
<accession>Q2MGM9</accession>
<accession>Q9U1H4</accession>
<accession>Q9W1E2</accession>
<accession>Q9W1E3</accession>
<sequence>MIAKPNQATTEPPLSLRPGTVPTVPATTPARPATITIQRRHPAPKADSTPHTLPPFSPSPSPASSPSPAPAQTPGAQKTQSQAAITHPAAVASPSAPVAAAAPKTPKTPEPRSTHTHTHTHSQHFSPPPRESEMDGERSPSHSGHEMTLSMDGIDSSLVFGSARVPVNSSTPYSDATRTKKHSPGHIKRPMNAFMVWSQMERRKICERTPDLHNAEISKELGRRWQLLSKDDKQPYIIEAEKLRKLHMIEYPNYKYRPQKKQTRSPGSLKPNQDADGCEARNDTTNNNNSLTTLAINGTTTAGRKSKRSTSTCQSGSASKRLRNDSGDTSSKPKYEVKMESAEQLNSADIILPSADNLISYQSSEYLPLSTLSNADCDEKLHSELSSGPLESRENLSEVVNRFLPLFLGGNEDSQLGVSSLTQSQHNQSDPTAGLMDNISDISPINDREELTEEVMRYLPYLEVNPSSDGLTLKVESSSLLGKPLNEPVFDSEDNIVNDANLHSASHQIPPYVPDSHDCFAEDCGGDSSSHQVEFEVVRPQTVTMTMTCTLPYGGPDAGHTTFQADDFNAIPSAAEDSECSILTTSNSPQIGFNGSSFVEADAIGSTCTYAQQDYTGSVIETHNDLNYAAHDNNGALLAYTFEDLPPQPTGSHLEFNTNKYEFASYYKM</sequence>
<organism>
    <name type="scientific">Drosophila melanogaster</name>
    <name type="common">Fruit fly</name>
    <dbReference type="NCBI Taxonomy" id="7227"/>
    <lineage>
        <taxon>Eukaryota</taxon>
        <taxon>Metazoa</taxon>
        <taxon>Ecdysozoa</taxon>
        <taxon>Arthropoda</taxon>
        <taxon>Hexapoda</taxon>
        <taxon>Insecta</taxon>
        <taxon>Pterygota</taxon>
        <taxon>Neoptera</taxon>
        <taxon>Endopterygota</taxon>
        <taxon>Diptera</taxon>
        <taxon>Brachycera</taxon>
        <taxon>Muscomorpha</taxon>
        <taxon>Ephydroidea</taxon>
        <taxon>Drosophilidae</taxon>
        <taxon>Drosophila</taxon>
        <taxon>Sophophora</taxon>
    </lineage>
</organism>
<reference key="1">
    <citation type="journal article" date="2000" name="Science">
        <title>The genome sequence of Drosophila melanogaster.</title>
        <authorList>
            <person name="Adams M.D."/>
            <person name="Celniker S.E."/>
            <person name="Holt R.A."/>
            <person name="Evans C.A."/>
            <person name="Gocayne J.D."/>
            <person name="Amanatides P.G."/>
            <person name="Scherer S.E."/>
            <person name="Li P.W."/>
            <person name="Hoskins R.A."/>
            <person name="Galle R.F."/>
            <person name="George R.A."/>
            <person name="Lewis S.E."/>
            <person name="Richards S."/>
            <person name="Ashburner M."/>
            <person name="Henderson S.N."/>
            <person name="Sutton G.G."/>
            <person name="Wortman J.R."/>
            <person name="Yandell M.D."/>
            <person name="Zhang Q."/>
            <person name="Chen L.X."/>
            <person name="Brandon R.C."/>
            <person name="Rogers Y.-H.C."/>
            <person name="Blazej R.G."/>
            <person name="Champe M."/>
            <person name="Pfeiffer B.D."/>
            <person name="Wan K.H."/>
            <person name="Doyle C."/>
            <person name="Baxter E.G."/>
            <person name="Helt G."/>
            <person name="Nelson C.R."/>
            <person name="Miklos G.L.G."/>
            <person name="Abril J.F."/>
            <person name="Agbayani A."/>
            <person name="An H.-J."/>
            <person name="Andrews-Pfannkoch C."/>
            <person name="Baldwin D."/>
            <person name="Ballew R.M."/>
            <person name="Basu A."/>
            <person name="Baxendale J."/>
            <person name="Bayraktaroglu L."/>
            <person name="Beasley E.M."/>
            <person name="Beeson K.Y."/>
            <person name="Benos P.V."/>
            <person name="Berman B.P."/>
            <person name="Bhandari D."/>
            <person name="Bolshakov S."/>
            <person name="Borkova D."/>
            <person name="Botchan M.R."/>
            <person name="Bouck J."/>
            <person name="Brokstein P."/>
            <person name="Brottier P."/>
            <person name="Burtis K.C."/>
            <person name="Busam D.A."/>
            <person name="Butler H."/>
            <person name="Cadieu E."/>
            <person name="Center A."/>
            <person name="Chandra I."/>
            <person name="Cherry J.M."/>
            <person name="Cawley S."/>
            <person name="Dahlke C."/>
            <person name="Davenport L.B."/>
            <person name="Davies P."/>
            <person name="de Pablos B."/>
            <person name="Delcher A."/>
            <person name="Deng Z."/>
            <person name="Mays A.D."/>
            <person name="Dew I."/>
            <person name="Dietz S.M."/>
            <person name="Dodson K."/>
            <person name="Doup L.E."/>
            <person name="Downes M."/>
            <person name="Dugan-Rocha S."/>
            <person name="Dunkov B.C."/>
            <person name="Dunn P."/>
            <person name="Durbin K.J."/>
            <person name="Evangelista C.C."/>
            <person name="Ferraz C."/>
            <person name="Ferriera S."/>
            <person name="Fleischmann W."/>
            <person name="Fosler C."/>
            <person name="Gabrielian A.E."/>
            <person name="Garg N.S."/>
            <person name="Gelbart W.M."/>
            <person name="Glasser K."/>
            <person name="Glodek A."/>
            <person name="Gong F."/>
            <person name="Gorrell J.H."/>
            <person name="Gu Z."/>
            <person name="Guan P."/>
            <person name="Harris M."/>
            <person name="Harris N.L."/>
            <person name="Harvey D.A."/>
            <person name="Heiman T.J."/>
            <person name="Hernandez J.R."/>
            <person name="Houck J."/>
            <person name="Hostin D."/>
            <person name="Houston K.A."/>
            <person name="Howland T.J."/>
            <person name="Wei M.-H."/>
            <person name="Ibegwam C."/>
            <person name="Jalali M."/>
            <person name="Kalush F."/>
            <person name="Karpen G.H."/>
            <person name="Ke Z."/>
            <person name="Kennison J.A."/>
            <person name="Ketchum K.A."/>
            <person name="Kimmel B.E."/>
            <person name="Kodira C.D."/>
            <person name="Kraft C.L."/>
            <person name="Kravitz S."/>
            <person name="Kulp D."/>
            <person name="Lai Z."/>
            <person name="Lasko P."/>
            <person name="Lei Y."/>
            <person name="Levitsky A.A."/>
            <person name="Li J.H."/>
            <person name="Li Z."/>
            <person name="Liang Y."/>
            <person name="Lin X."/>
            <person name="Liu X."/>
            <person name="Mattei B."/>
            <person name="McIntosh T.C."/>
            <person name="McLeod M.P."/>
            <person name="McPherson D."/>
            <person name="Merkulov G."/>
            <person name="Milshina N.V."/>
            <person name="Mobarry C."/>
            <person name="Morris J."/>
            <person name="Moshrefi A."/>
            <person name="Mount S.M."/>
            <person name="Moy M."/>
            <person name="Murphy B."/>
            <person name="Murphy L."/>
            <person name="Muzny D.M."/>
            <person name="Nelson D.L."/>
            <person name="Nelson D.R."/>
            <person name="Nelson K.A."/>
            <person name="Nixon K."/>
            <person name="Nusskern D.R."/>
            <person name="Pacleb J.M."/>
            <person name="Palazzolo M."/>
            <person name="Pittman G.S."/>
            <person name="Pan S."/>
            <person name="Pollard J."/>
            <person name="Puri V."/>
            <person name="Reese M.G."/>
            <person name="Reinert K."/>
            <person name="Remington K."/>
            <person name="Saunders R.D.C."/>
            <person name="Scheeler F."/>
            <person name="Shen H."/>
            <person name="Shue B.C."/>
            <person name="Siden-Kiamos I."/>
            <person name="Simpson M."/>
            <person name="Skupski M.P."/>
            <person name="Smith T.J."/>
            <person name="Spier E."/>
            <person name="Spradling A.C."/>
            <person name="Stapleton M."/>
            <person name="Strong R."/>
            <person name="Sun E."/>
            <person name="Svirskas R."/>
            <person name="Tector C."/>
            <person name="Turner R."/>
            <person name="Venter E."/>
            <person name="Wang A.H."/>
            <person name="Wang X."/>
            <person name="Wang Z.-Y."/>
            <person name="Wassarman D.A."/>
            <person name="Weinstock G.M."/>
            <person name="Weissenbach J."/>
            <person name="Williams S.M."/>
            <person name="Woodage T."/>
            <person name="Worley K.C."/>
            <person name="Wu D."/>
            <person name="Yang S."/>
            <person name="Yao Q.A."/>
            <person name="Ye J."/>
            <person name="Yeh R.-F."/>
            <person name="Zaveri J.S."/>
            <person name="Zhan M."/>
            <person name="Zhang G."/>
            <person name="Zhao Q."/>
            <person name="Zheng L."/>
            <person name="Zheng X.H."/>
            <person name="Zhong F.N."/>
            <person name="Zhong W."/>
            <person name="Zhou X."/>
            <person name="Zhu S.C."/>
            <person name="Zhu X."/>
            <person name="Smith H.O."/>
            <person name="Gibbs R.A."/>
            <person name="Myers E.W."/>
            <person name="Rubin G.M."/>
            <person name="Venter J.C."/>
        </authorList>
    </citation>
    <scope>NUCLEOTIDE SEQUENCE [LARGE SCALE GENOMIC DNA]</scope>
    <source>
        <strain>Berkeley</strain>
    </source>
</reference>
<reference key="2">
    <citation type="journal article" date="2002" name="Genome Biol.">
        <title>Annotation of the Drosophila melanogaster euchromatic genome: a systematic review.</title>
        <authorList>
            <person name="Misra S."/>
            <person name="Crosby M.A."/>
            <person name="Mungall C.J."/>
            <person name="Matthews B.B."/>
            <person name="Campbell K.S."/>
            <person name="Hradecky P."/>
            <person name="Huang Y."/>
            <person name="Kaminker J.S."/>
            <person name="Millburn G.H."/>
            <person name="Prochnik S.E."/>
            <person name="Smith C.D."/>
            <person name="Tupy J.L."/>
            <person name="Whitfield E.J."/>
            <person name="Bayraktaroglu L."/>
            <person name="Berman B.P."/>
            <person name="Bettencourt B.R."/>
            <person name="Celniker S.E."/>
            <person name="de Grey A.D.N.J."/>
            <person name="Drysdale R.A."/>
            <person name="Harris N.L."/>
            <person name="Richter J."/>
            <person name="Russo S."/>
            <person name="Schroeder A.J."/>
            <person name="Shu S.Q."/>
            <person name="Stapleton M."/>
            <person name="Yamada C."/>
            <person name="Ashburner M."/>
            <person name="Gelbart W.M."/>
            <person name="Rubin G.M."/>
            <person name="Lewis S.E."/>
        </authorList>
    </citation>
    <scope>GENOME REANNOTATION</scope>
    <source>
        <strain>Berkeley</strain>
    </source>
</reference>
<reference key="3">
    <citation type="submission" date="1999-12" db="EMBL/GenBank/DDBJ databases">
        <title>Cloning of Sox14, a new Drosophila sox gene.</title>
        <authorList>
            <person name="Cremazy F."/>
            <person name="Berta P."/>
            <person name="Girard F."/>
        </authorList>
    </citation>
    <scope>NUCLEOTIDE SEQUENCE [MRNA] OF 1-542</scope>
</reference>
<reference key="4">
    <citation type="journal article" date="1992" name="Nucleic Acids Res.">
        <title>A conserved family of genes related to the testis determining gene, SRY.</title>
        <authorList>
            <person name="Denny P."/>
            <person name="Swift S."/>
            <person name="Brand N."/>
            <person name="Dabhade N."/>
            <person name="Barton P."/>
            <person name="Ashworth A."/>
        </authorList>
    </citation>
    <scope>NUCLEOTIDE SEQUENCE [MRNA] OF 198-251</scope>
    <source>
        <strain>Canton-S</strain>
        <tissue>Embryo</tissue>
    </source>
</reference>
<name>SOX14_DROME</name>
<gene>
    <name type="primary">Sox14</name>
    <name type="ORF">CG3090</name>
</gene>
<keyword id="KW-0238">DNA-binding</keyword>
<keyword id="KW-0539">Nucleus</keyword>
<keyword id="KW-1185">Reference proteome</keyword>
<keyword id="KW-0804">Transcription</keyword>
<keyword id="KW-0805">Transcription regulation</keyword>